<dbReference type="EC" id="2.5.1.29"/>
<dbReference type="EMBL" id="U30821">
    <property type="protein sequence ID" value="AAA81312.1"/>
    <property type="molecule type" value="Genomic_DNA"/>
</dbReference>
<dbReference type="PIR" id="T06969">
    <property type="entry name" value="T06969"/>
</dbReference>
<dbReference type="SMR" id="P48368"/>
<dbReference type="UniPathway" id="UPA00389">
    <property type="reaction ID" value="UER00564"/>
</dbReference>
<dbReference type="GO" id="GO:0009842">
    <property type="term" value="C:cyanelle"/>
    <property type="evidence" value="ECO:0007669"/>
    <property type="project" value="UniProtKB-SubCell"/>
</dbReference>
<dbReference type="GO" id="GO:0004311">
    <property type="term" value="F:geranylgeranyl diphosphate synthase activity"/>
    <property type="evidence" value="ECO:0000250"/>
    <property type="project" value="UniProtKB"/>
</dbReference>
<dbReference type="GO" id="GO:0046872">
    <property type="term" value="F:metal ion binding"/>
    <property type="evidence" value="ECO:0007669"/>
    <property type="project" value="UniProtKB-KW"/>
</dbReference>
<dbReference type="GO" id="GO:0016117">
    <property type="term" value="P:carotenoid biosynthetic process"/>
    <property type="evidence" value="ECO:0007669"/>
    <property type="project" value="UniProtKB-KW"/>
</dbReference>
<dbReference type="GO" id="GO:0015995">
    <property type="term" value="P:chlorophyll biosynthetic process"/>
    <property type="evidence" value="ECO:0007669"/>
    <property type="project" value="UniProtKB-KW"/>
</dbReference>
<dbReference type="GO" id="GO:0033386">
    <property type="term" value="P:geranylgeranyl diphosphate biosynthetic process"/>
    <property type="evidence" value="ECO:0000250"/>
    <property type="project" value="UniProtKB"/>
</dbReference>
<dbReference type="GO" id="GO:0015979">
    <property type="term" value="P:photosynthesis"/>
    <property type="evidence" value="ECO:0007669"/>
    <property type="project" value="UniProtKB-KW"/>
</dbReference>
<dbReference type="CDD" id="cd00685">
    <property type="entry name" value="Trans_IPPS_HT"/>
    <property type="match status" value="1"/>
</dbReference>
<dbReference type="FunFam" id="1.10.600.10:FF:000001">
    <property type="entry name" value="Geranylgeranyl diphosphate synthase"/>
    <property type="match status" value="1"/>
</dbReference>
<dbReference type="Gene3D" id="1.10.600.10">
    <property type="entry name" value="Farnesyl Diphosphate Synthase"/>
    <property type="match status" value="1"/>
</dbReference>
<dbReference type="InterPro" id="IPR054848">
    <property type="entry name" value="GGPPSyn_CRT-like"/>
</dbReference>
<dbReference type="InterPro" id="IPR008949">
    <property type="entry name" value="Isoprenoid_synthase_dom_sf"/>
</dbReference>
<dbReference type="InterPro" id="IPR000092">
    <property type="entry name" value="Polyprenyl_synt"/>
</dbReference>
<dbReference type="InterPro" id="IPR033749">
    <property type="entry name" value="Polyprenyl_synt_CS"/>
</dbReference>
<dbReference type="InterPro" id="IPR053378">
    <property type="entry name" value="Prenyl_diphosphate_synthase"/>
</dbReference>
<dbReference type="NCBIfam" id="NF045485">
    <property type="entry name" value="FPPsyn"/>
    <property type="match status" value="1"/>
</dbReference>
<dbReference type="NCBIfam" id="NF045685">
    <property type="entry name" value="GGPPSynCrtE"/>
    <property type="match status" value="1"/>
</dbReference>
<dbReference type="PANTHER" id="PTHR43281">
    <property type="entry name" value="FARNESYL DIPHOSPHATE SYNTHASE"/>
    <property type="match status" value="1"/>
</dbReference>
<dbReference type="PANTHER" id="PTHR43281:SF1">
    <property type="entry name" value="FARNESYL DIPHOSPHATE SYNTHASE"/>
    <property type="match status" value="1"/>
</dbReference>
<dbReference type="Pfam" id="PF00348">
    <property type="entry name" value="polyprenyl_synt"/>
    <property type="match status" value="1"/>
</dbReference>
<dbReference type="SFLD" id="SFLDS00005">
    <property type="entry name" value="Isoprenoid_Synthase_Type_I"/>
    <property type="match status" value="1"/>
</dbReference>
<dbReference type="SFLD" id="SFLDG01017">
    <property type="entry name" value="Polyprenyl_Transferase_Like"/>
    <property type="match status" value="1"/>
</dbReference>
<dbReference type="SUPFAM" id="SSF48576">
    <property type="entry name" value="Terpenoid synthases"/>
    <property type="match status" value="1"/>
</dbReference>
<dbReference type="PROSITE" id="PS00723">
    <property type="entry name" value="POLYPRENYL_SYNTHASE_1"/>
    <property type="match status" value="1"/>
</dbReference>
<dbReference type="PROSITE" id="PS00444">
    <property type="entry name" value="POLYPRENYL_SYNTHASE_2"/>
    <property type="match status" value="1"/>
</dbReference>
<sequence length="300" mass="33008">MKPLQTNFNLLTYLYERKEIVEDTLNKSIPRGNPTFIYDSIRYSLSAGGKRIRPILCLASCELAGGTMEMALPTACALEMIHTMSLIHDDLPAMDNDSYRRGKPTNHIIYGEDLAILAGDALLAYAFEFIATQTKNVPADLIVKVIAQVAHSVTTSGLVGGQIIDLSSEGKSDTTLETLNFIHIHKTGALLEAAVLSGALLAGAKEKDMNRFLRYAQNIGLAFQIIDDVLDIISTEEKLGKSIGKDLKTQKATYPSFWGVEESIKQAELLVEEAKEEILYFDNKAIPLIAIADFIVNRNN</sequence>
<keyword id="KW-0125">Carotenoid biosynthesis</keyword>
<keyword id="KW-0149">Chlorophyll biosynthesis</keyword>
<keyword id="KW-0194">Cyanelle</keyword>
<keyword id="KW-0414">Isoprene biosynthesis</keyword>
<keyword id="KW-0460">Magnesium</keyword>
<keyword id="KW-0479">Metal-binding</keyword>
<keyword id="KW-0602">Photosynthesis</keyword>
<keyword id="KW-0934">Plastid</keyword>
<keyword id="KW-0808">Transferase</keyword>
<proteinExistence type="inferred from homology"/>
<comment type="function">
    <text evidence="1">Catalyzes the condensation of farnesyl diphosphate (FPP) and isopentenyl diphosphate (IPP) to yield geranylgeranyl diphosphate (GGPP) needed for biosynthesis of carotenoids and diterpenes.</text>
</comment>
<comment type="catalytic activity">
    <reaction>
        <text>isopentenyl diphosphate + (2E,6E)-farnesyl diphosphate = (2E,6E,10E)-geranylgeranyl diphosphate + diphosphate</text>
        <dbReference type="Rhea" id="RHEA:17653"/>
        <dbReference type="ChEBI" id="CHEBI:33019"/>
        <dbReference type="ChEBI" id="CHEBI:58756"/>
        <dbReference type="ChEBI" id="CHEBI:128769"/>
        <dbReference type="ChEBI" id="CHEBI:175763"/>
        <dbReference type="EC" id="2.5.1.29"/>
    </reaction>
</comment>
<comment type="cofactor">
    <cofactor evidence="1">
        <name>Mg(2+)</name>
        <dbReference type="ChEBI" id="CHEBI:18420"/>
    </cofactor>
    <text evidence="1">Binds 2 Mg(2+) ions per subunit.</text>
</comment>
<comment type="pathway">
    <text>Isoprenoid biosynthesis; geranylgeranyl diphosphate biosynthesis; geranylgeranyl diphosphate from farnesyl diphosphate and isopentenyl diphosphate: step 1/1.</text>
</comment>
<comment type="subcellular location">
    <subcellularLocation>
        <location>Plastid</location>
        <location>Cyanelle</location>
    </subcellularLocation>
</comment>
<comment type="similarity">
    <text evidence="4">Belongs to the FPP/GGPP synthase family.</text>
</comment>
<gene>
    <name type="primary">crtE</name>
</gene>
<reference key="1">
    <citation type="journal article" date="1995" name="Plant Mol. Biol. Rep.">
        <title>Nucleotide sequence of the cyanelle DNA from Cyanophora paradoxa.</title>
        <authorList>
            <person name="Stirewalt V.L."/>
            <person name="Michalowski C.B."/>
            <person name="Loeffelhardt W."/>
            <person name="Bohnert H.J."/>
            <person name="Bryant D.A."/>
        </authorList>
    </citation>
    <scope>NUCLEOTIDE SEQUENCE [LARGE SCALE GENOMIC DNA]</scope>
    <source>
        <strain>UTEX LB 555 / Pringsheim</strain>
    </source>
</reference>
<reference key="2">
    <citation type="book" date="1997" name="Eukaryotism and symbiosis">
        <title>The complete sequence of the cyanelle genome of Cyanophora paradoxa: the genetic complexity of a primitive plastid.</title>
        <editorList>
            <person name="Schenk H.E.A."/>
            <person name="Herrmann R."/>
            <person name="Jeon K.W."/>
            <person name="Mueller N.E."/>
            <person name="Schwemmler W."/>
        </editorList>
        <authorList>
            <person name="Loeffelhardt W."/>
            <person name="Stirewalt V.L."/>
            <person name="Michalowski C.B."/>
            <person name="Annarella M."/>
            <person name="Farley J.Y."/>
            <person name="Schluchter W.M."/>
            <person name="Chung S."/>
            <person name="Newmann-Spallart C."/>
            <person name="Steiner J.M."/>
            <person name="Jakowitsch J."/>
            <person name="Bohnert H.J."/>
            <person name="Bryant D.A."/>
        </authorList>
    </citation>
    <scope>NUCLEOTIDE SEQUENCE [LARGE SCALE GENOMIC DNA]</scope>
    <source>
        <strain>UTEX LB 555 / Pringsheim</strain>
    </source>
</reference>
<name>CRTE_CYAPA</name>
<organism>
    <name type="scientific">Cyanophora paradoxa</name>
    <dbReference type="NCBI Taxonomy" id="2762"/>
    <lineage>
        <taxon>Eukaryota</taxon>
        <taxon>Glaucocystophyceae</taxon>
        <taxon>Cyanophoraceae</taxon>
        <taxon>Cyanophora</taxon>
    </lineage>
</organism>
<accession>P48368</accession>
<protein>
    <recommendedName>
        <fullName>Geranylgeranyl diphosphate synthase</fullName>
        <shortName>GGPP synthase</shortName>
        <ecNumber>2.5.1.29</ecNumber>
    </recommendedName>
    <alternativeName>
        <fullName>Farnesyltranstransferase</fullName>
    </alternativeName>
</protein>
<geneLocation type="cyanelle"/>
<feature type="chain" id="PRO_0000123996" description="Geranylgeranyl diphosphate synthase">
    <location>
        <begin position="1"/>
        <end position="300"/>
    </location>
</feature>
<feature type="binding site" evidence="2">
    <location>
        <position position="50"/>
    </location>
    <ligand>
        <name>isopentenyl diphosphate</name>
        <dbReference type="ChEBI" id="CHEBI:128769"/>
    </ligand>
</feature>
<feature type="binding site" evidence="2">
    <location>
        <position position="53"/>
    </location>
    <ligand>
        <name>isopentenyl diphosphate</name>
        <dbReference type="ChEBI" id="CHEBI:128769"/>
    </ligand>
</feature>
<feature type="binding site" evidence="3">
    <location>
        <position position="82"/>
    </location>
    <ligand>
        <name>isopentenyl diphosphate</name>
        <dbReference type="ChEBI" id="CHEBI:128769"/>
    </ligand>
</feature>
<feature type="binding site" evidence="2">
    <location>
        <position position="89"/>
    </location>
    <ligand>
        <name>Mg(2+)</name>
        <dbReference type="ChEBI" id="CHEBI:18420"/>
        <label>1</label>
    </ligand>
</feature>
<feature type="binding site" evidence="2">
    <location>
        <position position="89"/>
    </location>
    <ligand>
        <name>Mg(2+)</name>
        <dbReference type="ChEBI" id="CHEBI:18420"/>
        <label>2</label>
    </ligand>
</feature>
<feature type="binding site" evidence="2">
    <location>
        <position position="95"/>
    </location>
    <ligand>
        <name>Mg(2+)</name>
        <dbReference type="ChEBI" id="CHEBI:18420"/>
        <label>1</label>
    </ligand>
</feature>
<feature type="binding site" evidence="2">
    <location>
        <position position="95"/>
    </location>
    <ligand>
        <name>Mg(2+)</name>
        <dbReference type="ChEBI" id="CHEBI:18420"/>
        <label>2</label>
    </ligand>
</feature>
<feature type="binding site" evidence="1">
    <location>
        <position position="100"/>
    </location>
    <ligand>
        <name>(2E,6E)-farnesyl diphosphate</name>
        <dbReference type="ChEBI" id="CHEBI:175763"/>
    </ligand>
</feature>
<feature type="binding site" evidence="2">
    <location>
        <position position="101"/>
    </location>
    <ligand>
        <name>isopentenyl diphosphate</name>
        <dbReference type="ChEBI" id="CHEBI:128769"/>
    </ligand>
</feature>
<feature type="binding site" evidence="1">
    <location>
        <position position="186"/>
    </location>
    <ligand>
        <name>(2E,6E)-farnesyl diphosphate</name>
        <dbReference type="ChEBI" id="CHEBI:175763"/>
    </ligand>
</feature>
<feature type="binding site" evidence="1">
    <location>
        <position position="187"/>
    </location>
    <ligand>
        <name>(2E,6E)-farnesyl diphosphate</name>
        <dbReference type="ChEBI" id="CHEBI:175763"/>
    </ligand>
</feature>
<feature type="binding site" evidence="1">
    <location>
        <position position="224"/>
    </location>
    <ligand>
        <name>(2E,6E)-farnesyl diphosphate</name>
        <dbReference type="ChEBI" id="CHEBI:175763"/>
    </ligand>
</feature>
<evidence type="ECO:0000250" key="1"/>
<evidence type="ECO:0000250" key="2">
    <source>
        <dbReference type="UniProtKB" id="P14324"/>
    </source>
</evidence>
<evidence type="ECO:0000250" key="3">
    <source>
        <dbReference type="UniProtKB" id="Q12051"/>
    </source>
</evidence>
<evidence type="ECO:0000305" key="4"/>